<accession>Q9V8R9</accession>
<accession>A1ZBI0</accession>
<accession>Q1WWD0</accession>
<accession>Q24440</accession>
<accession>Q24441</accession>
<accession>Q24442</accession>
<accession>Q9V8R8</accession>
<accession>Q9V8S0</accession>
<protein>
    <recommendedName>
        <fullName>Protein 4.1 homolog</fullName>
    </recommendedName>
    <alternativeName>
        <fullName>Protein coracle</fullName>
    </alternativeName>
</protein>
<gene>
    <name type="primary">cora</name>
    <name type="ORF">CG11949</name>
</gene>
<comment type="function">
    <text evidence="5">An integral component of the septate junction. May play a role in cell-cell interactions that are necessary for proper development. Vital for embryonic development.</text>
</comment>
<comment type="subcellular location">
    <subcellularLocation>
        <location>Cell junction</location>
        <location>Septate junction</location>
    </subcellularLocation>
    <text>Septate junction in the apical-lateral domain of epithelial cells during embryonic and imaginal disk development.</text>
</comment>
<comment type="alternative products">
    <event type="alternative splicing"/>
    <isoform>
        <id>Q9V8R9-1</id>
        <name>1</name>
        <name>A</name>
        <sequence type="displayed"/>
    </isoform>
    <isoform>
        <id>Q9V8R9-2</id>
        <name>2</name>
        <sequence type="described" ref="VSP_000476 VSP_000477 VSP_000479 VSP_000480 VSP_000481"/>
    </isoform>
    <isoform>
        <id>Q9V8R9-3</id>
        <name>3</name>
        <name>C</name>
        <sequence type="described" ref="VSP_000475 VSP_000478 VSP_000479"/>
    </isoform>
    <isoform>
        <id>Q9V8R9-4</id>
        <name>4</name>
        <name>B</name>
        <sequence type="described" ref="VSP_000476 VSP_000477 VSP_000479"/>
    </isoform>
    <isoform>
        <id>Q9V8R9-5</id>
        <name>5</name>
        <sequence type="described" ref="VSP_000474 VSP_000478"/>
    </isoform>
    <isoform>
        <id>Q9V8R9-6</id>
        <name>6</name>
        <name>D</name>
        <sequence type="described" ref="VSP_000478"/>
    </isoform>
</comment>
<comment type="tissue specificity">
    <text>At onset of germ band retraction, expression is seen in epidermis, hindgut and foregut. During retraction, expression extends to tracheal branches and salivary glands.</text>
</comment>
<comment type="developmental stage">
    <text>Expressed weakly in 4-8 hours embryos, more abundant expression in 8-12 hours and remains throughout later embryonic and larval stages.</text>
</comment>
<reference key="1">
    <citation type="journal article" date="1994" name="Development">
        <title>A Drosophila homologue of membrane-skeleton protein 4.1 is associated with septate junctions and is encoded by the coracle gene.</title>
        <authorList>
            <person name="Fehon R.G."/>
            <person name="Dawson I.A."/>
            <person name="Artavanis-Tsakonas S."/>
        </authorList>
    </citation>
    <scope>NUCLEOTIDE SEQUENCE [MRNA] (ISOFORM 1)</scope>
    <scope>NUCLEOTIDE SEQUENCE [MRNA] OF 278-1698 (ISOFORMS 2 AND 3)</scope>
    <scope>FUNCTION</scope>
    <source>
        <strain>Oregon-R</strain>
        <tissue>Embryo</tissue>
    </source>
</reference>
<reference key="2">
    <citation type="journal article" date="2000" name="Science">
        <title>The genome sequence of Drosophila melanogaster.</title>
        <authorList>
            <person name="Adams M.D."/>
            <person name="Celniker S.E."/>
            <person name="Holt R.A."/>
            <person name="Evans C.A."/>
            <person name="Gocayne J.D."/>
            <person name="Amanatides P.G."/>
            <person name="Scherer S.E."/>
            <person name="Li P.W."/>
            <person name="Hoskins R.A."/>
            <person name="Galle R.F."/>
            <person name="George R.A."/>
            <person name="Lewis S.E."/>
            <person name="Richards S."/>
            <person name="Ashburner M."/>
            <person name="Henderson S.N."/>
            <person name="Sutton G.G."/>
            <person name="Wortman J.R."/>
            <person name="Yandell M.D."/>
            <person name="Zhang Q."/>
            <person name="Chen L.X."/>
            <person name="Brandon R.C."/>
            <person name="Rogers Y.-H.C."/>
            <person name="Blazej R.G."/>
            <person name="Champe M."/>
            <person name="Pfeiffer B.D."/>
            <person name="Wan K.H."/>
            <person name="Doyle C."/>
            <person name="Baxter E.G."/>
            <person name="Helt G."/>
            <person name="Nelson C.R."/>
            <person name="Miklos G.L.G."/>
            <person name="Abril J.F."/>
            <person name="Agbayani A."/>
            <person name="An H.-J."/>
            <person name="Andrews-Pfannkoch C."/>
            <person name="Baldwin D."/>
            <person name="Ballew R.M."/>
            <person name="Basu A."/>
            <person name="Baxendale J."/>
            <person name="Bayraktaroglu L."/>
            <person name="Beasley E.M."/>
            <person name="Beeson K.Y."/>
            <person name="Benos P.V."/>
            <person name="Berman B.P."/>
            <person name="Bhandari D."/>
            <person name="Bolshakov S."/>
            <person name="Borkova D."/>
            <person name="Botchan M.R."/>
            <person name="Bouck J."/>
            <person name="Brokstein P."/>
            <person name="Brottier P."/>
            <person name="Burtis K.C."/>
            <person name="Busam D.A."/>
            <person name="Butler H."/>
            <person name="Cadieu E."/>
            <person name="Center A."/>
            <person name="Chandra I."/>
            <person name="Cherry J.M."/>
            <person name="Cawley S."/>
            <person name="Dahlke C."/>
            <person name="Davenport L.B."/>
            <person name="Davies P."/>
            <person name="de Pablos B."/>
            <person name="Delcher A."/>
            <person name="Deng Z."/>
            <person name="Mays A.D."/>
            <person name="Dew I."/>
            <person name="Dietz S.M."/>
            <person name="Dodson K."/>
            <person name="Doup L.E."/>
            <person name="Downes M."/>
            <person name="Dugan-Rocha S."/>
            <person name="Dunkov B.C."/>
            <person name="Dunn P."/>
            <person name="Durbin K.J."/>
            <person name="Evangelista C.C."/>
            <person name="Ferraz C."/>
            <person name="Ferriera S."/>
            <person name="Fleischmann W."/>
            <person name="Fosler C."/>
            <person name="Gabrielian A.E."/>
            <person name="Garg N.S."/>
            <person name="Gelbart W.M."/>
            <person name="Glasser K."/>
            <person name="Glodek A."/>
            <person name="Gong F."/>
            <person name="Gorrell J.H."/>
            <person name="Gu Z."/>
            <person name="Guan P."/>
            <person name="Harris M."/>
            <person name="Harris N.L."/>
            <person name="Harvey D.A."/>
            <person name="Heiman T.J."/>
            <person name="Hernandez J.R."/>
            <person name="Houck J."/>
            <person name="Hostin D."/>
            <person name="Houston K.A."/>
            <person name="Howland T.J."/>
            <person name="Wei M.-H."/>
            <person name="Ibegwam C."/>
            <person name="Jalali M."/>
            <person name="Kalush F."/>
            <person name="Karpen G.H."/>
            <person name="Ke Z."/>
            <person name="Kennison J.A."/>
            <person name="Ketchum K.A."/>
            <person name="Kimmel B.E."/>
            <person name="Kodira C.D."/>
            <person name="Kraft C.L."/>
            <person name="Kravitz S."/>
            <person name="Kulp D."/>
            <person name="Lai Z."/>
            <person name="Lasko P."/>
            <person name="Lei Y."/>
            <person name="Levitsky A.A."/>
            <person name="Li J.H."/>
            <person name="Li Z."/>
            <person name="Liang Y."/>
            <person name="Lin X."/>
            <person name="Liu X."/>
            <person name="Mattei B."/>
            <person name="McIntosh T.C."/>
            <person name="McLeod M.P."/>
            <person name="McPherson D."/>
            <person name="Merkulov G."/>
            <person name="Milshina N.V."/>
            <person name="Mobarry C."/>
            <person name="Morris J."/>
            <person name="Moshrefi A."/>
            <person name="Mount S.M."/>
            <person name="Moy M."/>
            <person name="Murphy B."/>
            <person name="Murphy L."/>
            <person name="Muzny D.M."/>
            <person name="Nelson D.L."/>
            <person name="Nelson D.R."/>
            <person name="Nelson K.A."/>
            <person name="Nixon K."/>
            <person name="Nusskern D.R."/>
            <person name="Pacleb J.M."/>
            <person name="Palazzolo M."/>
            <person name="Pittman G.S."/>
            <person name="Pan S."/>
            <person name="Pollard J."/>
            <person name="Puri V."/>
            <person name="Reese M.G."/>
            <person name="Reinert K."/>
            <person name="Remington K."/>
            <person name="Saunders R.D.C."/>
            <person name="Scheeler F."/>
            <person name="Shen H."/>
            <person name="Shue B.C."/>
            <person name="Siden-Kiamos I."/>
            <person name="Simpson M."/>
            <person name="Skupski M.P."/>
            <person name="Smith T.J."/>
            <person name="Spier E."/>
            <person name="Spradling A.C."/>
            <person name="Stapleton M."/>
            <person name="Strong R."/>
            <person name="Sun E."/>
            <person name="Svirskas R."/>
            <person name="Tector C."/>
            <person name="Turner R."/>
            <person name="Venter E."/>
            <person name="Wang A.H."/>
            <person name="Wang X."/>
            <person name="Wang Z.-Y."/>
            <person name="Wassarman D.A."/>
            <person name="Weinstock G.M."/>
            <person name="Weissenbach J."/>
            <person name="Williams S.M."/>
            <person name="Woodage T."/>
            <person name="Worley K.C."/>
            <person name="Wu D."/>
            <person name="Yang S."/>
            <person name="Yao Q.A."/>
            <person name="Ye J."/>
            <person name="Yeh R.-F."/>
            <person name="Zaveri J.S."/>
            <person name="Zhan M."/>
            <person name="Zhang G."/>
            <person name="Zhao Q."/>
            <person name="Zheng L."/>
            <person name="Zheng X.H."/>
            <person name="Zhong F.N."/>
            <person name="Zhong W."/>
            <person name="Zhou X."/>
            <person name="Zhu S.C."/>
            <person name="Zhu X."/>
            <person name="Smith H.O."/>
            <person name="Gibbs R.A."/>
            <person name="Myers E.W."/>
            <person name="Rubin G.M."/>
            <person name="Venter J.C."/>
        </authorList>
    </citation>
    <scope>NUCLEOTIDE SEQUENCE [LARGE SCALE GENOMIC DNA]</scope>
    <source>
        <strain>Berkeley</strain>
    </source>
</reference>
<reference key="3">
    <citation type="journal article" date="2002" name="Genome Biol.">
        <title>Annotation of the Drosophila melanogaster euchromatic genome: a systematic review.</title>
        <authorList>
            <person name="Misra S."/>
            <person name="Crosby M.A."/>
            <person name="Mungall C.J."/>
            <person name="Matthews B.B."/>
            <person name="Campbell K.S."/>
            <person name="Hradecky P."/>
            <person name="Huang Y."/>
            <person name="Kaminker J.S."/>
            <person name="Millburn G.H."/>
            <person name="Prochnik S.E."/>
            <person name="Smith C.D."/>
            <person name="Tupy J.L."/>
            <person name="Whitfield E.J."/>
            <person name="Bayraktaroglu L."/>
            <person name="Berman B.P."/>
            <person name="Bettencourt B.R."/>
            <person name="Celniker S.E."/>
            <person name="de Grey A.D.N.J."/>
            <person name="Drysdale R.A."/>
            <person name="Harris N.L."/>
            <person name="Richter J."/>
            <person name="Russo S."/>
            <person name="Schroeder A.J."/>
            <person name="Shu S.Q."/>
            <person name="Stapleton M."/>
            <person name="Yamada C."/>
            <person name="Ashburner M."/>
            <person name="Gelbart W.M."/>
            <person name="Rubin G.M."/>
            <person name="Lewis S.E."/>
        </authorList>
    </citation>
    <scope>GENOME REANNOTATION</scope>
    <scope>ALTERNATIVE SPLICING</scope>
    <source>
        <strain>Berkeley</strain>
    </source>
</reference>
<reference key="4">
    <citation type="journal article" date="2002" name="Genome Biol.">
        <title>A Drosophila full-length cDNA resource.</title>
        <authorList>
            <person name="Stapleton M."/>
            <person name="Carlson J.W."/>
            <person name="Brokstein P."/>
            <person name="Yu C."/>
            <person name="Champe M."/>
            <person name="George R.A."/>
            <person name="Guarin H."/>
            <person name="Kronmiller B."/>
            <person name="Pacleb J.M."/>
            <person name="Park S."/>
            <person name="Wan K.H."/>
            <person name="Rubin G.M."/>
            <person name="Celniker S.E."/>
        </authorList>
    </citation>
    <scope>NUCLEOTIDE SEQUENCE [LARGE SCALE MRNA] (ISOFORM 5)</scope>
    <source>
        <strain>Berkeley</strain>
    </source>
</reference>
<reference key="5">
    <citation type="submission" date="2006-03" db="EMBL/GenBank/DDBJ databases">
        <authorList>
            <person name="Stapleton M."/>
            <person name="Carlson J.W."/>
            <person name="Chavez C."/>
            <person name="Frise E."/>
            <person name="George R.A."/>
            <person name="Pacleb J.M."/>
            <person name="Park S."/>
            <person name="Wan K.H."/>
            <person name="Yu C."/>
            <person name="Celniker S.E."/>
        </authorList>
    </citation>
    <scope>NUCLEOTIDE SEQUENCE [LARGE SCALE MRNA] (ISOFORM 3)</scope>
    <source>
        <strain>Berkeley</strain>
    </source>
</reference>
<reference key="6">
    <citation type="journal article" date="2007" name="Mol. Biosyst.">
        <title>An integrated chemical, mass spectrometric and computational strategy for (quantitative) phosphoproteomics: application to Drosophila melanogaster Kc167 cells.</title>
        <authorList>
            <person name="Bodenmiller B."/>
            <person name="Mueller L.N."/>
            <person name="Pedrioli P.G.A."/>
            <person name="Pflieger D."/>
            <person name="Juenger M.A."/>
            <person name="Eng J.K."/>
            <person name="Aebersold R."/>
            <person name="Tao W.A."/>
        </authorList>
    </citation>
    <scope>PHOSPHORYLATION [LARGE SCALE ANALYSIS] AT SER-659 AND SER-1590</scope>
    <scope>IDENTIFICATION BY MASS SPECTROMETRY</scope>
</reference>
<reference key="7">
    <citation type="journal article" date="2008" name="J. Proteome Res.">
        <title>Phosphoproteome analysis of Drosophila melanogaster embryos.</title>
        <authorList>
            <person name="Zhai B."/>
            <person name="Villen J."/>
            <person name="Beausoleil S.A."/>
            <person name="Mintseris J."/>
            <person name="Gygi S.P."/>
        </authorList>
    </citation>
    <scope>PHOSPHORYLATION [LARGE SCALE ANALYSIS] AT SER-471; SER-474; SER-478; SER-566; SER-687; THR-689; SER-697; SER-1398; SER-1401; SER-1402 AND THR-1407</scope>
    <scope>IDENTIFICATION BY MASS SPECTROMETRY</scope>
    <source>
        <tissue>Embryo</tissue>
    </source>
</reference>
<proteinExistence type="evidence at protein level"/>
<keyword id="KW-0025">Alternative splicing</keyword>
<keyword id="KW-0965">Cell junction</keyword>
<keyword id="KW-0217">Developmental protein</keyword>
<keyword id="KW-0597">Phosphoprotein</keyword>
<keyword id="KW-1185">Reference proteome</keyword>
<dbReference type="EMBL" id="L27467">
    <property type="protein sequence ID" value="AAB59187.1"/>
    <property type="molecule type" value="mRNA"/>
</dbReference>
<dbReference type="EMBL" id="L27468">
    <property type="protein sequence ID" value="AAA28742.1"/>
    <property type="molecule type" value="mRNA"/>
</dbReference>
<dbReference type="EMBL" id="L27469">
    <property type="protein sequence ID" value="AAA28743.1"/>
    <property type="molecule type" value="mRNA"/>
</dbReference>
<dbReference type="EMBL" id="AE013599">
    <property type="protein sequence ID" value="AAF57591.1"/>
    <property type="molecule type" value="Genomic_DNA"/>
</dbReference>
<dbReference type="EMBL" id="AE013599">
    <property type="protein sequence ID" value="AAF57592.1"/>
    <property type="molecule type" value="Genomic_DNA"/>
</dbReference>
<dbReference type="EMBL" id="AE013599">
    <property type="protein sequence ID" value="AAF57593.1"/>
    <property type="molecule type" value="Genomic_DNA"/>
</dbReference>
<dbReference type="EMBL" id="AE013599">
    <property type="protein sequence ID" value="AAM70846.1"/>
    <property type="molecule type" value="Genomic_DNA"/>
</dbReference>
<dbReference type="EMBL" id="AY070992">
    <property type="protein sequence ID" value="AAL48614.1"/>
    <property type="molecule type" value="mRNA"/>
</dbReference>
<dbReference type="EMBL" id="BT024976">
    <property type="protein sequence ID" value="ABE01206.1"/>
    <property type="molecule type" value="mRNA"/>
</dbReference>
<dbReference type="PIR" id="T13800">
    <property type="entry name" value="T13800"/>
</dbReference>
<dbReference type="RefSeq" id="NP_523791.2">
    <molecule id="Q9V8R9-1"/>
    <property type="nucleotide sequence ID" value="NM_079067.4"/>
</dbReference>
<dbReference type="RefSeq" id="NP_725864.1">
    <molecule id="Q9V8R9-3"/>
    <property type="nucleotide sequence ID" value="NM_166336.2"/>
</dbReference>
<dbReference type="RefSeq" id="NP_725865.1">
    <molecule id="Q9V8R9-4"/>
    <property type="nucleotide sequence ID" value="NM_166337.2"/>
</dbReference>
<dbReference type="RefSeq" id="NP_725866.1">
    <molecule id="Q9V8R9-6"/>
    <property type="nucleotide sequence ID" value="NM_166338.3"/>
</dbReference>
<dbReference type="SMR" id="Q9V8R9"/>
<dbReference type="BioGRID" id="62870">
    <property type="interactions" value="26"/>
</dbReference>
<dbReference type="DIP" id="DIP-20283N"/>
<dbReference type="FunCoup" id="Q9V8R9">
    <property type="interactions" value="510"/>
</dbReference>
<dbReference type="IntAct" id="Q9V8R9">
    <property type="interactions" value="12"/>
</dbReference>
<dbReference type="STRING" id="7227.FBpp0085697"/>
<dbReference type="TCDB" id="1.H.2.1.1">
    <property type="family name" value="the invertebrate pmp22-claudin (claudin2) family"/>
</dbReference>
<dbReference type="GlyGen" id="Q9V8R9">
    <property type="glycosylation" value="2 sites, 1 O-linked glycan (1 site)"/>
</dbReference>
<dbReference type="iPTMnet" id="Q9V8R9"/>
<dbReference type="PaxDb" id="7227-FBpp0085697"/>
<dbReference type="PeptideAtlas" id="Q9V8R9"/>
<dbReference type="DNASU" id="37205"/>
<dbReference type="EnsemblMetazoa" id="FBtr0086506">
    <molecule id="Q9V8R9-3"/>
    <property type="protein sequence ID" value="FBpp0085694"/>
    <property type="gene ID" value="FBgn0010434"/>
</dbReference>
<dbReference type="EnsemblMetazoa" id="FBtr0086508">
    <molecule id="Q9V8R9-4"/>
    <property type="protein sequence ID" value="FBpp0085696"/>
    <property type="gene ID" value="FBgn0010434"/>
</dbReference>
<dbReference type="EnsemblMetazoa" id="FBtr0086509">
    <molecule id="Q9V8R9-1"/>
    <property type="protein sequence ID" value="FBpp0085697"/>
    <property type="gene ID" value="FBgn0010434"/>
</dbReference>
<dbReference type="EnsemblMetazoa" id="FBtr0301279">
    <molecule id="Q9V8R9-6"/>
    <property type="protein sequence ID" value="FBpp0290494"/>
    <property type="gene ID" value="FBgn0010434"/>
</dbReference>
<dbReference type="GeneID" id="37205"/>
<dbReference type="KEGG" id="dme:Dmel_CG11949"/>
<dbReference type="UCSC" id="CG11949-RA">
    <property type="organism name" value="d. melanogaster"/>
</dbReference>
<dbReference type="AGR" id="FB:FBgn0010434"/>
<dbReference type="CTD" id="37205"/>
<dbReference type="FlyBase" id="FBgn0010434">
    <property type="gene designation" value="cora"/>
</dbReference>
<dbReference type="VEuPathDB" id="VectorBase:FBgn0010434"/>
<dbReference type="eggNOG" id="KOG3527">
    <property type="taxonomic scope" value="Eukaryota"/>
</dbReference>
<dbReference type="GeneTree" id="ENSGT00940000167098"/>
<dbReference type="HOGENOM" id="CLU_002715_0_0_1"/>
<dbReference type="InParanoid" id="Q9V8R9"/>
<dbReference type="OMA" id="WPLNFAV"/>
<dbReference type="OrthoDB" id="6589456at2759"/>
<dbReference type="PhylomeDB" id="Q9V8R9"/>
<dbReference type="Reactome" id="R-DME-6794361">
    <property type="pathway name" value="Neurexins and neuroligins"/>
</dbReference>
<dbReference type="SignaLink" id="Q9V8R9"/>
<dbReference type="BioGRID-ORCS" id="37205">
    <property type="hits" value="0 hits in 3 CRISPR screens"/>
</dbReference>
<dbReference type="ChiTaRS" id="cora">
    <property type="organism name" value="fly"/>
</dbReference>
<dbReference type="GenomeRNAi" id="37205"/>
<dbReference type="PRO" id="PR:Q9V8R9"/>
<dbReference type="Proteomes" id="UP000000803">
    <property type="component" value="Chromosome 2R"/>
</dbReference>
<dbReference type="Bgee" id="FBgn0010434">
    <property type="expression patterns" value="Expressed in distal medullary amacrine neuron Dm11 in insect head and 255 other cell types or tissues"/>
</dbReference>
<dbReference type="ExpressionAtlas" id="Q9V8R9">
    <property type="expression patterns" value="baseline and differential"/>
</dbReference>
<dbReference type="GO" id="GO:0005856">
    <property type="term" value="C:cytoskeleton"/>
    <property type="evidence" value="ECO:0000318"/>
    <property type="project" value="GO_Central"/>
</dbReference>
<dbReference type="GO" id="GO:0005886">
    <property type="term" value="C:plasma membrane"/>
    <property type="evidence" value="ECO:0000314"/>
    <property type="project" value="FlyBase"/>
</dbReference>
<dbReference type="GO" id="GO:0005918">
    <property type="term" value="C:septate junction"/>
    <property type="evidence" value="ECO:0000314"/>
    <property type="project" value="UniProtKB"/>
</dbReference>
<dbReference type="GO" id="GO:0005920">
    <property type="term" value="C:smooth septate junction"/>
    <property type="evidence" value="ECO:0000314"/>
    <property type="project" value="FlyBase"/>
</dbReference>
<dbReference type="GO" id="GO:0003779">
    <property type="term" value="F:actin binding"/>
    <property type="evidence" value="ECO:0007669"/>
    <property type="project" value="InterPro"/>
</dbReference>
<dbReference type="GO" id="GO:0005198">
    <property type="term" value="F:structural molecule activity"/>
    <property type="evidence" value="ECO:0007669"/>
    <property type="project" value="InterPro"/>
</dbReference>
<dbReference type="GO" id="GO:0031032">
    <property type="term" value="P:actomyosin structure organization"/>
    <property type="evidence" value="ECO:0000318"/>
    <property type="project" value="GO_Central"/>
</dbReference>
<dbReference type="GO" id="GO:0007527">
    <property type="term" value="P:adult somatic muscle development"/>
    <property type="evidence" value="ECO:0000315"/>
    <property type="project" value="FlyBase"/>
</dbReference>
<dbReference type="GO" id="GO:0061343">
    <property type="term" value="P:cell adhesion involved in heart morphogenesis"/>
    <property type="evidence" value="ECO:0000315"/>
    <property type="project" value="FlyBase"/>
</dbReference>
<dbReference type="GO" id="GO:0045216">
    <property type="term" value="P:cell-cell junction organization"/>
    <property type="evidence" value="ECO:0000304"/>
    <property type="project" value="FlyBase"/>
</dbReference>
<dbReference type="GO" id="GO:0007391">
    <property type="term" value="P:dorsal closure"/>
    <property type="evidence" value="ECO:0000315"/>
    <property type="project" value="FlyBase"/>
</dbReference>
<dbReference type="GO" id="GO:0009792">
    <property type="term" value="P:embryo development ending in birth or egg hatching"/>
    <property type="evidence" value="ECO:0000315"/>
    <property type="project" value="UniProtKB"/>
</dbReference>
<dbReference type="GO" id="GO:0060857">
    <property type="term" value="P:establishment of glial blood-brain barrier"/>
    <property type="evidence" value="ECO:0000315"/>
    <property type="project" value="FlyBase"/>
</dbReference>
<dbReference type="GO" id="GO:0003015">
    <property type="term" value="P:heart process"/>
    <property type="evidence" value="ECO:0000315"/>
    <property type="project" value="FlyBase"/>
</dbReference>
<dbReference type="GO" id="GO:0035321">
    <property type="term" value="P:maintenance of imaginal disc-derived wing hair orientation"/>
    <property type="evidence" value="ECO:0000315"/>
    <property type="project" value="FlyBase"/>
</dbReference>
<dbReference type="GO" id="GO:0006612">
    <property type="term" value="P:protein targeting to membrane"/>
    <property type="evidence" value="ECO:0000304"/>
    <property type="project" value="FlyBase"/>
</dbReference>
<dbReference type="GO" id="GO:0035151">
    <property type="term" value="P:regulation of tube size, open tracheal system"/>
    <property type="evidence" value="ECO:0000315"/>
    <property type="project" value="FlyBase"/>
</dbReference>
<dbReference type="CDD" id="cd14473">
    <property type="entry name" value="FERM_B-lobe"/>
    <property type="match status" value="1"/>
</dbReference>
<dbReference type="CDD" id="cd13184">
    <property type="entry name" value="FERM_C_4_1_family"/>
    <property type="match status" value="1"/>
</dbReference>
<dbReference type="CDD" id="cd01765">
    <property type="entry name" value="FERM_F0_F1"/>
    <property type="match status" value="1"/>
</dbReference>
<dbReference type="FunFam" id="1.20.80.10:FF:000001">
    <property type="entry name" value="Erythrocyte membrane protein band 4.1"/>
    <property type="match status" value="1"/>
</dbReference>
<dbReference type="FunFam" id="2.30.29.30:FF:000001">
    <property type="entry name" value="Erythrocyte membrane protein band 4.1"/>
    <property type="match status" value="1"/>
</dbReference>
<dbReference type="Gene3D" id="1.20.80.10">
    <property type="match status" value="1"/>
</dbReference>
<dbReference type="Gene3D" id="3.10.20.90">
    <property type="entry name" value="Phosphatidylinositol 3-kinase Catalytic Subunit, Chain A, domain 1"/>
    <property type="match status" value="1"/>
</dbReference>
<dbReference type="Gene3D" id="2.30.29.30">
    <property type="entry name" value="Pleckstrin-homology domain (PH domain)/Phosphotyrosine-binding domain (PTB)"/>
    <property type="match status" value="1"/>
</dbReference>
<dbReference type="InterPro" id="IPR008379">
    <property type="entry name" value="Band_4.1_C"/>
</dbReference>
<dbReference type="InterPro" id="IPR019749">
    <property type="entry name" value="Band_41_domain"/>
</dbReference>
<dbReference type="InterPro" id="IPR014847">
    <property type="entry name" value="FA"/>
</dbReference>
<dbReference type="InterPro" id="IPR014352">
    <property type="entry name" value="FERM/acyl-CoA-bd_prot_sf"/>
</dbReference>
<dbReference type="InterPro" id="IPR035963">
    <property type="entry name" value="FERM_2"/>
</dbReference>
<dbReference type="InterPro" id="IPR019748">
    <property type="entry name" value="FERM_central"/>
</dbReference>
<dbReference type="InterPro" id="IPR019747">
    <property type="entry name" value="FERM_CS"/>
</dbReference>
<dbReference type="InterPro" id="IPR000299">
    <property type="entry name" value="FERM_domain"/>
</dbReference>
<dbReference type="InterPro" id="IPR018979">
    <property type="entry name" value="FERM_N"/>
</dbReference>
<dbReference type="InterPro" id="IPR018980">
    <property type="entry name" value="FERM_PH-like_C"/>
</dbReference>
<dbReference type="InterPro" id="IPR011993">
    <property type="entry name" value="PH-like_dom_sf"/>
</dbReference>
<dbReference type="InterPro" id="IPR029071">
    <property type="entry name" value="Ubiquitin-like_domsf"/>
</dbReference>
<dbReference type="PANTHER" id="PTHR23280">
    <property type="entry name" value="4.1 G PROTEIN"/>
    <property type="match status" value="1"/>
</dbReference>
<dbReference type="PANTHER" id="PTHR23280:SF21">
    <property type="entry name" value="PROTEIN 4.1 HOMOLOG"/>
    <property type="match status" value="1"/>
</dbReference>
<dbReference type="Pfam" id="PF05902">
    <property type="entry name" value="4_1_CTD"/>
    <property type="match status" value="1"/>
</dbReference>
<dbReference type="Pfam" id="PF09380">
    <property type="entry name" value="FERM_C"/>
    <property type="match status" value="1"/>
</dbReference>
<dbReference type="Pfam" id="PF00373">
    <property type="entry name" value="FERM_M"/>
    <property type="match status" value="1"/>
</dbReference>
<dbReference type="Pfam" id="PF09379">
    <property type="entry name" value="FERM_N"/>
    <property type="match status" value="1"/>
</dbReference>
<dbReference type="PRINTS" id="PR00935">
    <property type="entry name" value="BAND41"/>
</dbReference>
<dbReference type="SMART" id="SM00295">
    <property type="entry name" value="B41"/>
    <property type="match status" value="1"/>
</dbReference>
<dbReference type="SMART" id="SM01195">
    <property type="entry name" value="FA"/>
    <property type="match status" value="1"/>
</dbReference>
<dbReference type="SMART" id="SM01196">
    <property type="entry name" value="FERM_C"/>
    <property type="match status" value="1"/>
</dbReference>
<dbReference type="SUPFAM" id="SSF50729">
    <property type="entry name" value="PH domain-like"/>
    <property type="match status" value="1"/>
</dbReference>
<dbReference type="SUPFAM" id="SSF47031">
    <property type="entry name" value="Second domain of FERM"/>
    <property type="match status" value="1"/>
</dbReference>
<dbReference type="SUPFAM" id="SSF54236">
    <property type="entry name" value="Ubiquitin-like"/>
    <property type="match status" value="1"/>
</dbReference>
<dbReference type="PROSITE" id="PS00661">
    <property type="entry name" value="FERM_2"/>
    <property type="match status" value="1"/>
</dbReference>
<dbReference type="PROSITE" id="PS50057">
    <property type="entry name" value="FERM_3"/>
    <property type="match status" value="1"/>
</dbReference>
<sequence>MPAEIKPSAPAEPETPTKSKPKSSSSSHGKPALARVTLLDGSLLDVSIDRKAIGRDVINSICAGLNLIEKDYFGLTYETPTDPRTWLDLEKPVSKFFRTDTWPLTFAVKFYPPEPSQLKEDITRYHLCLQVRNDILEGRLPCTFVTHALLGSYLVQSEMGDYDAEEMPTRAYLKDFKIAPNQTAELEDKVMDLHKTHKGQSPAEAELHYLENAKKLAMYGVDLHPAKDSEGVDIMLGVCASGLLVYRDKLRINRFAWPKILKISYKRHHFYIKIRPGEFEQYESTIGFKLANHRAAKKLWKSCVEHHTFFRLMTPEPVSKSKMFPVFGSTYRYKGRTQAESTNTPVDRTPPKFNRTLSGARLTSRSMDALALAEKEKVARKSSTLDHRGDRNADGDAHSRSPIKNKKEKDADKEAKLREKKQKEKEEKERKEREKRELEEKKKAEKAAKAALAAGAAAGAAVNGNDELNDSNKSDKSSGRRGVGIFSSGRKSKSGSPSKDGKDKSGKDKDKEVGRLGLVVTSGLGDNQQDQNLDEAARNAAKNRGSTTPGVTRQYEYAVDNDGNTSPTRKSYTPGGFRYDQDPNSRKSGADGQEQLSPTSQQKKIGLAFNYAPGNENALKETAEKLKAGQLSPRTQDKLNRGQLSPKSRAKLLQDPLLSPTTRAKLQGSAVDAAAVPLSDSQKRSYSPTKGPQGYSSGAPGSYKPISDPTADFLESQRYNKEPGYVGPSKADVAAGLAGAAGSKKPGSPTKTGKGAPGAAAAAAAGAAGAAAAAAKPKKRRVKIMVITSKFDPSTKRIDAENGSIEHSTGILDPATGLIDTKYGVIDPKKGTLEALNTKTGKKEVFQGDVDGKTGNLHLVSGVADPKTGRLDDTLGQIVCITPQDNPVVELTVITSRIDPATGKIDTVNGDVERSLGVLNLDTGLLDTKYGEINTRTGELKAIDPKSGKIVVSKNVKVDPGTGQITILGIVDPKTNKIDPNQGRLIEVGQQIDPIVEVTSLAGKFDSKRNIIDPKTAQVETSGGQFDPKAGKIDTKYGQIDLVKHTITFNDPKSGKTVTRDIKIEPTTGQIVLKNQVNPKNNKPDKDYARIISLRIVQQRVDPATKAPITEVSASKDKDIVVDPKSNQIWVPTGATDPATKEQQYISSSVDPKTGYVITIYGYLDPKTNEIKKQTKLDPNTIKIEPTSGKIYTATGEVDQATGEPLYAATQVDPESGEVYTKLARVDPKTGKIVIVRILLISKTDERGRPEEIDPSTCEIDPVSGRVLKFFNKTVYVYNMIDPVTGEIVQVDPNDPRFAGARTTVTHTMTLTGEIDPVTGRIKSEYGDIDPNTGDIDPATAVTDPVTGKLILNYAQIDPSHFGKQAQVQTTTETVPITRQQFFDGVKHISKGALRRDSEGSSDDDMTAQYGADQVNEILIGSPAGQAGGKLGKPVSTPTVVKTTTKQVLTKNIDGVTHNVEEEVRNLGTGEVTYSTQEHKADATPTDLSGAYVTATAVTTRTATTHEDLGKNAKTEQLEEKTVATTRTHDPNKQQQRVVTQEVKTTATVTSGDQYQRRDSVSSTSSGDSGTPIDGPYDGASVVRTDNQKSPLFTTSATTGPHVESTRVVLGEDTPGFSGHGEIISTQTVSSKTRTVETITYKTERDGIVETRVEQKITIQSDGDPIDHDKALAEAIQEATAMNPDMTVEKIEIQQQTQ</sequence>
<organism>
    <name type="scientific">Drosophila melanogaster</name>
    <name type="common">Fruit fly</name>
    <dbReference type="NCBI Taxonomy" id="7227"/>
    <lineage>
        <taxon>Eukaryota</taxon>
        <taxon>Metazoa</taxon>
        <taxon>Ecdysozoa</taxon>
        <taxon>Arthropoda</taxon>
        <taxon>Hexapoda</taxon>
        <taxon>Insecta</taxon>
        <taxon>Pterygota</taxon>
        <taxon>Neoptera</taxon>
        <taxon>Endopterygota</taxon>
        <taxon>Diptera</taxon>
        <taxon>Brachycera</taxon>
        <taxon>Muscomorpha</taxon>
        <taxon>Ephydroidea</taxon>
        <taxon>Drosophilidae</taxon>
        <taxon>Drosophila</taxon>
        <taxon>Sophophora</taxon>
    </lineage>
</organism>
<feature type="chain" id="PRO_0000219394" description="Protein 4.1 homolog">
    <location>
        <begin position="1"/>
        <end position="1698"/>
    </location>
</feature>
<feature type="domain" description="FERM" evidence="1">
    <location>
        <begin position="32"/>
        <end position="314"/>
    </location>
</feature>
<feature type="region of interest" description="Disordered" evidence="2">
    <location>
        <begin position="1"/>
        <end position="31"/>
    </location>
</feature>
<feature type="region of interest" description="Hydrophilic">
    <location>
        <begin position="317"/>
        <end position="434"/>
    </location>
</feature>
<feature type="region of interest" description="Disordered" evidence="2">
    <location>
        <begin position="335"/>
        <end position="361"/>
    </location>
</feature>
<feature type="region of interest" description="Disordered" evidence="2">
    <location>
        <begin position="374"/>
        <end position="710"/>
    </location>
</feature>
<feature type="region of interest" description="C-terminal (CTD)">
    <location>
        <begin position="1286"/>
        <end position="1698"/>
    </location>
</feature>
<feature type="region of interest" description="Disordered" evidence="2">
    <location>
        <begin position="1509"/>
        <end position="1599"/>
    </location>
</feature>
<feature type="compositionally biased region" description="Low complexity" evidence="2">
    <location>
        <begin position="12"/>
        <end position="27"/>
    </location>
</feature>
<feature type="compositionally biased region" description="Basic and acidic residues" evidence="2">
    <location>
        <begin position="374"/>
        <end position="448"/>
    </location>
</feature>
<feature type="compositionally biased region" description="Low complexity" evidence="2">
    <location>
        <begin position="449"/>
        <end position="461"/>
    </location>
</feature>
<feature type="compositionally biased region" description="Basic and acidic residues" evidence="2">
    <location>
        <begin position="499"/>
        <end position="514"/>
    </location>
</feature>
<feature type="compositionally biased region" description="Polar residues" evidence="2">
    <location>
        <begin position="562"/>
        <end position="571"/>
    </location>
</feature>
<feature type="compositionally biased region" description="Basic and acidic residues" evidence="2">
    <location>
        <begin position="579"/>
        <end position="589"/>
    </location>
</feature>
<feature type="compositionally biased region" description="Polar residues" evidence="2">
    <location>
        <begin position="594"/>
        <end position="603"/>
    </location>
</feature>
<feature type="compositionally biased region" description="Basic and acidic residues" evidence="2">
    <location>
        <begin position="618"/>
        <end position="627"/>
    </location>
</feature>
<feature type="compositionally biased region" description="Polar residues" evidence="2">
    <location>
        <begin position="684"/>
        <end position="696"/>
    </location>
</feature>
<feature type="compositionally biased region" description="Basic and acidic residues" evidence="2">
    <location>
        <begin position="1509"/>
        <end position="1532"/>
    </location>
</feature>
<feature type="compositionally biased region" description="Polar residues" evidence="2">
    <location>
        <begin position="1533"/>
        <end position="1554"/>
    </location>
</feature>
<feature type="compositionally biased region" description="Low complexity" evidence="2">
    <location>
        <begin position="1561"/>
        <end position="1571"/>
    </location>
</feature>
<feature type="compositionally biased region" description="Polar residues" evidence="2">
    <location>
        <begin position="1584"/>
        <end position="1599"/>
    </location>
</feature>
<feature type="modified residue" description="Phosphoserine" evidence="4">
    <location>
        <position position="471"/>
    </location>
</feature>
<feature type="modified residue" description="Phosphoserine" evidence="4">
    <location>
        <position position="474"/>
    </location>
</feature>
<feature type="modified residue" description="Phosphoserine" evidence="4">
    <location>
        <position position="478"/>
    </location>
</feature>
<feature type="modified residue" description="Phosphoserine" evidence="4">
    <location>
        <position position="566"/>
    </location>
</feature>
<feature type="modified residue" description="Phosphoserine" evidence="3">
    <location>
        <position position="659"/>
    </location>
</feature>
<feature type="modified residue" description="Phosphoserine" evidence="4">
    <location>
        <position position="687"/>
    </location>
</feature>
<feature type="modified residue" description="Phosphothreonine" evidence="4">
    <location>
        <position position="689"/>
    </location>
</feature>
<feature type="modified residue" description="Phosphoserine" evidence="4">
    <location>
        <position position="697"/>
    </location>
</feature>
<feature type="modified residue" description="Phosphoserine" evidence="4">
    <location>
        <position position="1398"/>
    </location>
</feature>
<feature type="modified residue" description="Phosphoserine" evidence="4">
    <location>
        <position position="1401"/>
    </location>
</feature>
<feature type="modified residue" description="Phosphoserine" evidence="4">
    <location>
        <position position="1402"/>
    </location>
</feature>
<feature type="modified residue" description="Phosphothreonine" evidence="4">
    <location>
        <position position="1407"/>
    </location>
</feature>
<feature type="modified residue" description="Phosphoserine" evidence="3">
    <location>
        <position position="1590"/>
    </location>
</feature>
<feature type="splice variant" id="VSP_000474" description="In isoform 5." evidence="6">
    <location>
        <begin position="1"/>
        <end position="312"/>
    </location>
</feature>
<feature type="splice variant" id="VSP_000476" description="In isoform 2 and isoform 4." evidence="7">
    <original>K</original>
    <variation>KSSTGTASASSQSSLEGDYETNLEIEAIEAEPPVQ</variation>
    <location>
        <position position="409"/>
    </location>
</feature>
<feature type="splice variant" id="VSP_000475" description="In isoform 3." evidence="7 8">
    <original>K</original>
    <variation>KLMRQSSTGTASASSQSSLEGDYETNLEIEAIEAEPPVQ</variation>
    <location>
        <position position="409"/>
    </location>
</feature>
<feature type="splice variant" id="VSP_000478" description="In isoform 3, isoform 5 and isoform 6." evidence="6 7 8">
    <location>
        <begin position="482"/>
        <end position="1480"/>
    </location>
</feature>
<feature type="splice variant" id="VSP_000477" description="In isoform 2 and isoform 4." evidence="7">
    <location>
        <begin position="482"/>
        <end position="1290"/>
    </location>
</feature>
<feature type="splice variant" id="VSP_000479" description="In isoform 2, isoform 3 and isoform 4." evidence="7 8">
    <location>
        <begin position="1554"/>
        <end position="1587"/>
    </location>
</feature>
<feature type="splice variant" id="VSP_000480" description="In isoform 2." evidence="7">
    <original>VSSKTRT</original>
    <variation>GGGGGGI</variation>
    <location>
        <begin position="1629"/>
        <end position="1635"/>
    </location>
</feature>
<feature type="splice variant" id="VSP_000481" description="In isoform 2." evidence="7">
    <location>
        <begin position="1636"/>
        <end position="1698"/>
    </location>
</feature>
<feature type="sequence conflict" description="In Ref. 1; AAB59187." evidence="9" ref="1">
    <original>I</original>
    <variation>V</variation>
    <location>
        <position position="970"/>
    </location>
</feature>
<evidence type="ECO:0000255" key="1">
    <source>
        <dbReference type="PROSITE-ProRule" id="PRU00084"/>
    </source>
</evidence>
<evidence type="ECO:0000256" key="2">
    <source>
        <dbReference type="SAM" id="MobiDB-lite"/>
    </source>
</evidence>
<evidence type="ECO:0000269" key="3">
    <source>
    </source>
</evidence>
<evidence type="ECO:0000269" key="4">
    <source>
    </source>
</evidence>
<evidence type="ECO:0000269" key="5">
    <source>
    </source>
</evidence>
<evidence type="ECO:0000303" key="6">
    <source>
    </source>
</evidence>
<evidence type="ECO:0000303" key="7">
    <source>
    </source>
</evidence>
<evidence type="ECO:0000303" key="8">
    <source ref="5"/>
</evidence>
<evidence type="ECO:0000305" key="9"/>
<name>EPB41_DROME</name>